<proteinExistence type="inferred from homology"/>
<gene>
    <name evidence="2" type="primary">ddl</name>
    <name type="ordered locus">amb3851</name>
</gene>
<reference key="1">
    <citation type="journal article" date="2005" name="DNA Res.">
        <title>Complete genome sequence of the facultative anaerobic magnetotactic bacterium Magnetospirillum sp. strain AMB-1.</title>
        <authorList>
            <person name="Matsunaga T."/>
            <person name="Okamura Y."/>
            <person name="Fukuda Y."/>
            <person name="Wahyudi A.T."/>
            <person name="Murase Y."/>
            <person name="Takeyama H."/>
        </authorList>
    </citation>
    <scope>NUCLEOTIDE SEQUENCE [LARGE SCALE GENOMIC DNA]</scope>
    <source>
        <strain>ATCC 700264 / AMB-1</strain>
    </source>
</reference>
<keyword id="KW-0067">ATP-binding</keyword>
<keyword id="KW-0133">Cell shape</keyword>
<keyword id="KW-0961">Cell wall biogenesis/degradation</keyword>
<keyword id="KW-0963">Cytoplasm</keyword>
<keyword id="KW-0436">Ligase</keyword>
<keyword id="KW-0460">Magnesium</keyword>
<keyword id="KW-0464">Manganese</keyword>
<keyword id="KW-0479">Metal-binding</keyword>
<keyword id="KW-0547">Nucleotide-binding</keyword>
<keyword id="KW-0573">Peptidoglycan synthesis</keyword>
<comment type="function">
    <text evidence="2">Cell wall formation.</text>
</comment>
<comment type="catalytic activity">
    <reaction evidence="2">
        <text>2 D-alanine + ATP = D-alanyl-D-alanine + ADP + phosphate + H(+)</text>
        <dbReference type="Rhea" id="RHEA:11224"/>
        <dbReference type="ChEBI" id="CHEBI:15378"/>
        <dbReference type="ChEBI" id="CHEBI:30616"/>
        <dbReference type="ChEBI" id="CHEBI:43474"/>
        <dbReference type="ChEBI" id="CHEBI:57416"/>
        <dbReference type="ChEBI" id="CHEBI:57822"/>
        <dbReference type="ChEBI" id="CHEBI:456216"/>
        <dbReference type="EC" id="6.3.2.4"/>
    </reaction>
</comment>
<comment type="cofactor">
    <cofactor evidence="1">
        <name>Mg(2+)</name>
        <dbReference type="ChEBI" id="CHEBI:18420"/>
    </cofactor>
    <cofactor evidence="1">
        <name>Mn(2+)</name>
        <dbReference type="ChEBI" id="CHEBI:29035"/>
    </cofactor>
    <text evidence="1">Binds 2 magnesium or manganese ions per subunit.</text>
</comment>
<comment type="pathway">
    <text evidence="2">Cell wall biogenesis; peptidoglycan biosynthesis.</text>
</comment>
<comment type="subcellular location">
    <subcellularLocation>
        <location evidence="2">Cytoplasm</location>
    </subcellularLocation>
</comment>
<comment type="similarity">
    <text evidence="2">Belongs to the D-alanine--D-alanine ligase family.</text>
</comment>
<accession>Q2W0H0</accession>
<organism>
    <name type="scientific">Paramagnetospirillum magneticum (strain ATCC 700264 / AMB-1)</name>
    <name type="common">Magnetospirillum magneticum</name>
    <dbReference type="NCBI Taxonomy" id="342108"/>
    <lineage>
        <taxon>Bacteria</taxon>
        <taxon>Pseudomonadati</taxon>
        <taxon>Pseudomonadota</taxon>
        <taxon>Alphaproteobacteria</taxon>
        <taxon>Rhodospirillales</taxon>
        <taxon>Magnetospirillaceae</taxon>
        <taxon>Paramagnetospirillum</taxon>
    </lineage>
</organism>
<evidence type="ECO:0000250" key="1"/>
<evidence type="ECO:0000255" key="2">
    <source>
        <dbReference type="HAMAP-Rule" id="MF_00047"/>
    </source>
</evidence>
<protein>
    <recommendedName>
        <fullName evidence="2">D-alanine--D-alanine ligase</fullName>
        <ecNumber evidence="2">6.3.2.4</ecNumber>
    </recommendedName>
    <alternativeName>
        <fullName evidence="2">D-Ala-D-Ala ligase</fullName>
    </alternativeName>
    <alternativeName>
        <fullName evidence="2">D-alanylalanine synthetase</fullName>
    </alternativeName>
</protein>
<sequence length="305" mass="32630">MSKRVTVLMGGASAERDVSLRSGAAAAKALEQAGFEVALVDCDRNPAELVRAITETRPDVVFNALHGRFGEDGCVQGVLNLLGVPYTHSGLLASAAAMDKAFARALFASAGIPVAEGRVITRTDRNGPDPLPRPFVVKPLNEGSSVGVFIVRDNQPSPLPDWPFDADEVLVESFIPGRELTAAVMGDRALGVLEITSDHGFYDYEAKYAPGGSRHLMPAPIPEADYAEACRLAVAAHKALGCRGVSRADLRYDDTVPGQPPRLVMLEVNTQPGMTATSLVPEMAAYQGITFPELVRWMVEEARCD</sequence>
<dbReference type="EC" id="6.3.2.4" evidence="2"/>
<dbReference type="EMBL" id="AP007255">
    <property type="protein sequence ID" value="BAE52655.1"/>
    <property type="molecule type" value="Genomic_DNA"/>
</dbReference>
<dbReference type="RefSeq" id="WP_011386205.1">
    <property type="nucleotide sequence ID" value="NC_007626.1"/>
</dbReference>
<dbReference type="SMR" id="Q2W0H0"/>
<dbReference type="STRING" id="342108.amb3851"/>
<dbReference type="KEGG" id="mag:amb3851"/>
<dbReference type="HOGENOM" id="CLU_039268_1_1_5"/>
<dbReference type="OrthoDB" id="9813261at2"/>
<dbReference type="UniPathway" id="UPA00219"/>
<dbReference type="Proteomes" id="UP000007058">
    <property type="component" value="Chromosome"/>
</dbReference>
<dbReference type="GO" id="GO:0005737">
    <property type="term" value="C:cytoplasm"/>
    <property type="evidence" value="ECO:0007669"/>
    <property type="project" value="UniProtKB-SubCell"/>
</dbReference>
<dbReference type="GO" id="GO:0005524">
    <property type="term" value="F:ATP binding"/>
    <property type="evidence" value="ECO:0007669"/>
    <property type="project" value="UniProtKB-KW"/>
</dbReference>
<dbReference type="GO" id="GO:0008716">
    <property type="term" value="F:D-alanine-D-alanine ligase activity"/>
    <property type="evidence" value="ECO:0007669"/>
    <property type="project" value="UniProtKB-UniRule"/>
</dbReference>
<dbReference type="GO" id="GO:0046872">
    <property type="term" value="F:metal ion binding"/>
    <property type="evidence" value="ECO:0007669"/>
    <property type="project" value="UniProtKB-KW"/>
</dbReference>
<dbReference type="GO" id="GO:0071555">
    <property type="term" value="P:cell wall organization"/>
    <property type="evidence" value="ECO:0007669"/>
    <property type="project" value="UniProtKB-KW"/>
</dbReference>
<dbReference type="GO" id="GO:0009252">
    <property type="term" value="P:peptidoglycan biosynthetic process"/>
    <property type="evidence" value="ECO:0007669"/>
    <property type="project" value="UniProtKB-UniRule"/>
</dbReference>
<dbReference type="GO" id="GO:0008360">
    <property type="term" value="P:regulation of cell shape"/>
    <property type="evidence" value="ECO:0007669"/>
    <property type="project" value="UniProtKB-KW"/>
</dbReference>
<dbReference type="Gene3D" id="3.40.50.20">
    <property type="match status" value="1"/>
</dbReference>
<dbReference type="Gene3D" id="3.30.1490.20">
    <property type="entry name" value="ATP-grasp fold, A domain"/>
    <property type="match status" value="1"/>
</dbReference>
<dbReference type="Gene3D" id="3.30.470.20">
    <property type="entry name" value="ATP-grasp fold, B domain"/>
    <property type="match status" value="1"/>
</dbReference>
<dbReference type="HAMAP" id="MF_00047">
    <property type="entry name" value="Dala_Dala_lig"/>
    <property type="match status" value="1"/>
</dbReference>
<dbReference type="InterPro" id="IPR011761">
    <property type="entry name" value="ATP-grasp"/>
</dbReference>
<dbReference type="InterPro" id="IPR013815">
    <property type="entry name" value="ATP_grasp_subdomain_1"/>
</dbReference>
<dbReference type="InterPro" id="IPR000291">
    <property type="entry name" value="D-Ala_lig_Van_CS"/>
</dbReference>
<dbReference type="InterPro" id="IPR005905">
    <property type="entry name" value="D_ala_D_ala"/>
</dbReference>
<dbReference type="InterPro" id="IPR011095">
    <property type="entry name" value="Dala_Dala_lig_C"/>
</dbReference>
<dbReference type="InterPro" id="IPR011127">
    <property type="entry name" value="Dala_Dala_lig_N"/>
</dbReference>
<dbReference type="InterPro" id="IPR016185">
    <property type="entry name" value="PreATP-grasp_dom_sf"/>
</dbReference>
<dbReference type="NCBIfam" id="TIGR01205">
    <property type="entry name" value="D_ala_D_alaTIGR"/>
    <property type="match status" value="1"/>
</dbReference>
<dbReference type="NCBIfam" id="NF002378">
    <property type="entry name" value="PRK01372.1"/>
    <property type="match status" value="1"/>
</dbReference>
<dbReference type="PANTHER" id="PTHR23132">
    <property type="entry name" value="D-ALANINE--D-ALANINE LIGASE"/>
    <property type="match status" value="1"/>
</dbReference>
<dbReference type="PANTHER" id="PTHR23132:SF23">
    <property type="entry name" value="D-ALANINE--D-ALANINE LIGASE B"/>
    <property type="match status" value="1"/>
</dbReference>
<dbReference type="Pfam" id="PF07478">
    <property type="entry name" value="Dala_Dala_lig_C"/>
    <property type="match status" value="1"/>
</dbReference>
<dbReference type="Pfam" id="PF01820">
    <property type="entry name" value="Dala_Dala_lig_N"/>
    <property type="match status" value="1"/>
</dbReference>
<dbReference type="PIRSF" id="PIRSF039102">
    <property type="entry name" value="Ddl/VanB"/>
    <property type="match status" value="1"/>
</dbReference>
<dbReference type="SUPFAM" id="SSF56059">
    <property type="entry name" value="Glutathione synthetase ATP-binding domain-like"/>
    <property type="match status" value="1"/>
</dbReference>
<dbReference type="SUPFAM" id="SSF52440">
    <property type="entry name" value="PreATP-grasp domain"/>
    <property type="match status" value="1"/>
</dbReference>
<dbReference type="PROSITE" id="PS50975">
    <property type="entry name" value="ATP_GRASP"/>
    <property type="match status" value="1"/>
</dbReference>
<dbReference type="PROSITE" id="PS00843">
    <property type="entry name" value="DALA_DALA_LIGASE_1"/>
    <property type="match status" value="1"/>
</dbReference>
<feature type="chain" id="PRO_0000341127" description="D-alanine--D-alanine ligase">
    <location>
        <begin position="1"/>
        <end position="305"/>
    </location>
</feature>
<feature type="domain" description="ATP-grasp" evidence="2">
    <location>
        <begin position="104"/>
        <end position="300"/>
    </location>
</feature>
<feature type="binding site" evidence="2">
    <location>
        <begin position="131"/>
        <end position="181"/>
    </location>
    <ligand>
        <name>ATP</name>
        <dbReference type="ChEBI" id="CHEBI:30616"/>
    </ligand>
</feature>
<feature type="binding site" evidence="2">
    <location>
        <position position="249"/>
    </location>
    <ligand>
        <name>Mg(2+)</name>
        <dbReference type="ChEBI" id="CHEBI:18420"/>
        <label>1</label>
    </ligand>
</feature>
<feature type="binding site" evidence="2">
    <location>
        <position position="267"/>
    </location>
    <ligand>
        <name>Mg(2+)</name>
        <dbReference type="ChEBI" id="CHEBI:18420"/>
        <label>1</label>
    </ligand>
</feature>
<feature type="binding site" evidence="2">
    <location>
        <position position="267"/>
    </location>
    <ligand>
        <name>Mg(2+)</name>
        <dbReference type="ChEBI" id="CHEBI:18420"/>
        <label>2</label>
    </ligand>
</feature>
<feature type="binding site" evidence="2">
    <location>
        <position position="269"/>
    </location>
    <ligand>
        <name>Mg(2+)</name>
        <dbReference type="ChEBI" id="CHEBI:18420"/>
        <label>2</label>
    </ligand>
</feature>
<name>DDL_PARM1</name>